<proteinExistence type="predicted"/>
<evidence type="ECO:0000255" key="1">
    <source>
        <dbReference type="PROSITE-ProRule" id="PRU00227"/>
    </source>
</evidence>
<evidence type="ECO:0000256" key="2">
    <source>
        <dbReference type="SAM" id="MobiDB-lite"/>
    </source>
</evidence>
<evidence type="ECO:0000305" key="3"/>
<protein>
    <recommendedName>
        <fullName>Acetamidase regulatory protein</fullName>
    </recommendedName>
</protein>
<keyword id="KW-0010">Activator</keyword>
<keyword id="KW-0238">DNA-binding</keyword>
<keyword id="KW-0479">Metal-binding</keyword>
<keyword id="KW-0539">Nucleus</keyword>
<keyword id="KW-1185">Reference proteome</keyword>
<keyword id="KW-0804">Transcription</keyword>
<keyword id="KW-0805">Transcription regulation</keyword>
<keyword id="KW-0862">Zinc</keyword>
<reference key="1">
    <citation type="journal article" date="1990" name="Mol. Cell. Biol.">
        <title>Sequence and functional analysis of the positively acting regulatory gene amdR from Aspergillus nidulans.</title>
        <authorList>
            <person name="Andrianopoulos A."/>
            <person name="Hynes M.J."/>
        </authorList>
    </citation>
    <scope>NUCLEOTIDE SEQUENCE [GENOMIC DNA]</scope>
</reference>
<reference key="2">
    <citation type="journal article" date="2005" name="Nature">
        <title>Sequencing of Aspergillus nidulans and comparative analysis with A. fumigatus and A. oryzae.</title>
        <authorList>
            <person name="Galagan J.E."/>
            <person name="Calvo S.E."/>
            <person name="Cuomo C."/>
            <person name="Ma L.-J."/>
            <person name="Wortman J.R."/>
            <person name="Batzoglou S."/>
            <person name="Lee S.-I."/>
            <person name="Bastuerkmen M."/>
            <person name="Spevak C.C."/>
            <person name="Clutterbuck J."/>
            <person name="Kapitonov V."/>
            <person name="Jurka J."/>
            <person name="Scazzocchio C."/>
            <person name="Farman M.L."/>
            <person name="Butler J."/>
            <person name="Purcell S."/>
            <person name="Harris S."/>
            <person name="Braus G.H."/>
            <person name="Draht O."/>
            <person name="Busch S."/>
            <person name="D'Enfert C."/>
            <person name="Bouchier C."/>
            <person name="Goldman G.H."/>
            <person name="Bell-Pedersen D."/>
            <person name="Griffiths-Jones S."/>
            <person name="Doonan J.H."/>
            <person name="Yu J."/>
            <person name="Vienken K."/>
            <person name="Pain A."/>
            <person name="Freitag M."/>
            <person name="Selker E.U."/>
            <person name="Archer D.B."/>
            <person name="Penalva M.A."/>
            <person name="Oakley B.R."/>
            <person name="Momany M."/>
            <person name="Tanaka T."/>
            <person name="Kumagai T."/>
            <person name="Asai K."/>
            <person name="Machida M."/>
            <person name="Nierman W.C."/>
            <person name="Denning D.W."/>
            <person name="Caddick M.X."/>
            <person name="Hynes M."/>
            <person name="Paoletti M."/>
            <person name="Fischer R."/>
            <person name="Miller B.L."/>
            <person name="Dyer P.S."/>
            <person name="Sachs M.S."/>
            <person name="Osmani S.A."/>
            <person name="Birren B.W."/>
        </authorList>
    </citation>
    <scope>NUCLEOTIDE SEQUENCE [LARGE SCALE GENOMIC DNA]</scope>
    <source>
        <strain>FGSC A4 / ATCC 38163 / CBS 112.46 / NRRL 194 / M139</strain>
    </source>
</reference>
<reference key="3">
    <citation type="journal article" date="2009" name="Fungal Genet. Biol.">
        <title>The 2008 update of the Aspergillus nidulans genome annotation: a community effort.</title>
        <authorList>
            <person name="Wortman J.R."/>
            <person name="Gilsenan J.M."/>
            <person name="Joardar V."/>
            <person name="Deegan J."/>
            <person name="Clutterbuck J."/>
            <person name="Andersen M.R."/>
            <person name="Archer D."/>
            <person name="Bencina M."/>
            <person name="Braus G."/>
            <person name="Coutinho P."/>
            <person name="von Dohren H."/>
            <person name="Doonan J."/>
            <person name="Driessen A.J."/>
            <person name="Durek P."/>
            <person name="Espeso E."/>
            <person name="Fekete E."/>
            <person name="Flipphi M."/>
            <person name="Estrada C.G."/>
            <person name="Geysens S."/>
            <person name="Goldman G."/>
            <person name="de Groot P.W."/>
            <person name="Hansen K."/>
            <person name="Harris S.D."/>
            <person name="Heinekamp T."/>
            <person name="Helmstaedt K."/>
            <person name="Henrissat B."/>
            <person name="Hofmann G."/>
            <person name="Homan T."/>
            <person name="Horio T."/>
            <person name="Horiuchi H."/>
            <person name="James S."/>
            <person name="Jones M."/>
            <person name="Karaffa L."/>
            <person name="Karanyi Z."/>
            <person name="Kato M."/>
            <person name="Keller N."/>
            <person name="Kelly D.E."/>
            <person name="Kiel J.A."/>
            <person name="Kim J.M."/>
            <person name="van der Klei I.J."/>
            <person name="Klis F.M."/>
            <person name="Kovalchuk A."/>
            <person name="Krasevec N."/>
            <person name="Kubicek C.P."/>
            <person name="Liu B."/>
            <person name="Maccabe A."/>
            <person name="Meyer V."/>
            <person name="Mirabito P."/>
            <person name="Miskei M."/>
            <person name="Mos M."/>
            <person name="Mullins J."/>
            <person name="Nelson D.R."/>
            <person name="Nielsen J."/>
            <person name="Oakley B.R."/>
            <person name="Osmani S.A."/>
            <person name="Pakula T."/>
            <person name="Paszewski A."/>
            <person name="Paulsen I."/>
            <person name="Pilsyk S."/>
            <person name="Pocsi I."/>
            <person name="Punt P.J."/>
            <person name="Ram A.F."/>
            <person name="Ren Q."/>
            <person name="Robellet X."/>
            <person name="Robson G."/>
            <person name="Seiboth B."/>
            <person name="van Solingen P."/>
            <person name="Specht T."/>
            <person name="Sun J."/>
            <person name="Taheri-Talesh N."/>
            <person name="Takeshita N."/>
            <person name="Ussery D."/>
            <person name="vanKuyk P.A."/>
            <person name="Visser H."/>
            <person name="van de Vondervoort P.J."/>
            <person name="de Vries R.P."/>
            <person name="Walton J."/>
            <person name="Xiang X."/>
            <person name="Xiong Y."/>
            <person name="Zeng A.P."/>
            <person name="Brandt B.W."/>
            <person name="Cornell M.J."/>
            <person name="van den Hondel C.A."/>
            <person name="Visser J."/>
            <person name="Oliver S.G."/>
            <person name="Turner G."/>
        </authorList>
    </citation>
    <scope>GENOME REANNOTATION</scope>
    <source>
        <strain>FGSC A4 / ATCC 38163 / CBS 112.46 / NRRL 194 / M139</strain>
    </source>
</reference>
<feature type="chain" id="PRO_0000114936" description="Acetamidase regulatory protein">
    <location>
        <begin position="1"/>
        <end position="798"/>
    </location>
</feature>
<feature type="DNA-binding region" description="Zn(2)-C6 fungal-type" evidence="1">
    <location>
        <begin position="20"/>
        <end position="50"/>
    </location>
</feature>
<feature type="region of interest" description="Disordered" evidence="2">
    <location>
        <begin position="68"/>
        <end position="96"/>
    </location>
</feature>
<feature type="region of interest" description="Disordered" evidence="2">
    <location>
        <begin position="115"/>
        <end position="172"/>
    </location>
</feature>
<feature type="region of interest" description="Disordered" evidence="2">
    <location>
        <begin position="632"/>
        <end position="714"/>
    </location>
</feature>
<feature type="compositionally biased region" description="Low complexity" evidence="2">
    <location>
        <begin position="82"/>
        <end position="94"/>
    </location>
</feature>
<feature type="compositionally biased region" description="Low complexity" evidence="2">
    <location>
        <begin position="133"/>
        <end position="147"/>
    </location>
</feature>
<feature type="compositionally biased region" description="Basic and acidic residues" evidence="2">
    <location>
        <begin position="632"/>
        <end position="641"/>
    </location>
</feature>
<feature type="compositionally biased region" description="Polar residues" evidence="2">
    <location>
        <begin position="644"/>
        <end position="663"/>
    </location>
</feature>
<feature type="compositionally biased region" description="Pro residues" evidence="2">
    <location>
        <begin position="678"/>
        <end position="687"/>
    </location>
</feature>
<feature type="sequence conflict" description="In Ref. 1; EAA59506." evidence="3" ref="1">
    <original>QV</original>
    <variation>LL</variation>
    <location>
        <begin position="563"/>
        <end position="564"/>
    </location>
</feature>
<accession>P15699</accession>
<accession>C8V5M9</accession>
<accession>Q5B5Z5</accession>
<organism>
    <name type="scientific">Emericella nidulans (strain FGSC A4 / ATCC 38163 / CBS 112.46 / NRRL 194 / M139)</name>
    <name type="common">Aspergillus nidulans</name>
    <dbReference type="NCBI Taxonomy" id="227321"/>
    <lineage>
        <taxon>Eukaryota</taxon>
        <taxon>Fungi</taxon>
        <taxon>Dikarya</taxon>
        <taxon>Ascomycota</taxon>
        <taxon>Pezizomycotina</taxon>
        <taxon>Eurotiomycetes</taxon>
        <taxon>Eurotiomycetidae</taxon>
        <taxon>Eurotiales</taxon>
        <taxon>Aspergillaceae</taxon>
        <taxon>Aspergillus</taxon>
        <taxon>Aspergillus subgen. Nidulantes</taxon>
    </lineage>
</organism>
<sequence length="798" mass="90005">MSSTAHPTNLAPSGNGSAACVHCHRRKVRCDARLVGLPCSNCRSAGKTDCQIHEKKKKLAVRSILDPVPIRCRPPNPEEAPKPISSLSPSSEPPNAFTTALRAVQSDITAPSGVANRVAHIRSRSSQYDTKGTRSNNNSGNNTQYQNVLPEPDSPPYSRPAASDPSEGESRADIEKRLVNLIDGEASDSRAIQRGVRAIYVGHELSNMSFLIRQQRDTGDDVYHFAGNEIPRRQLRTGHDQLLMDALTLPEPALADELVHAYFAQVNPGYPIVEEELFMSQYRNRDPADAPPILLLQTILLVGAHVTRPKSERDTLKDIFFRRAKWLFDNRIERNRDILVQAALLLTWHSDLADDDVSANAHYWIGIAARIATGLGMHRNPVCSRFVPRDRRMWRRLWYILVQFDVMVSLSYGRPQALNLEDSDVSPLTFSDFEGCGARVQADFVIHFSELCTMISYIVRERFGLRISAERRKAALLEADEALANWSLRLPDRLRLRASDMDPWSAMLHLTYNNFLILLHRPHPRASAYSDDYGPHDAEICSAAAGVIASIFEELRIHDRLKQVWYSGVHTLFTAMIQVRVELRFSNPVLAINALRRFDSASYSLRELAQYWSHASTILRLFEESRRLQEDLRTTTSDRPRRFSNLSNNSTNSPASQQKNTSGIPHLANINSSDATPPSAPSIPPLQPSSQLSYEVPTTESAHHNPRSQPTLSAHTHTYTTQPFDTWIPSNNLTPMDTVDNSREMLDWRQLFSFTDLEGPVLPSTMEGITELEDEWRQIYWQETPMSDLLQDGGWMHG</sequence>
<name>AMDR_EMENI</name>
<comment type="function">
    <text>Positively regulates the expression of 5 genes involved in the catabolism of certain amides (amdS), omega amino acids (gatA and gabA), and lactams (lamA and lamB) in the presence of omega amino acid inducers.</text>
</comment>
<comment type="subcellular location">
    <subcellularLocation>
        <location>Nucleus</location>
    </subcellularLocation>
</comment>
<comment type="sequence caution" evidence="3">
    <conflict type="erroneous gene model prediction">
        <sequence resource="EMBL-CDS" id="AAA33294"/>
    </conflict>
</comment>
<comment type="sequence caution" evidence="3">
    <conflict type="erroneous gene model prediction">
        <sequence resource="EMBL-CDS" id="CBF74839"/>
    </conflict>
</comment>
<comment type="sequence caution" evidence="3">
    <conflict type="erroneous gene model prediction">
        <sequence resource="EMBL-CDS" id="EAA59506"/>
    </conflict>
</comment>
<dbReference type="EMBL" id="M31517">
    <property type="protein sequence ID" value="AAA33294.1"/>
    <property type="status" value="ALT_SEQ"/>
    <property type="molecule type" value="Genomic_DNA"/>
</dbReference>
<dbReference type="EMBL" id="AACD01000065">
    <property type="protein sequence ID" value="EAA59506.1"/>
    <property type="status" value="ALT_SEQ"/>
    <property type="molecule type" value="Genomic_DNA"/>
</dbReference>
<dbReference type="EMBL" id="BN001302">
    <property type="protein sequence ID" value="CBF74839.1"/>
    <property type="status" value="ALT_SEQ"/>
    <property type="molecule type" value="Genomic_DNA"/>
</dbReference>
<dbReference type="PIR" id="A36332">
    <property type="entry name" value="A36332"/>
</dbReference>
<dbReference type="RefSeq" id="XP_661639.1">
    <property type="nucleotide sequence ID" value="XM_656547.1"/>
</dbReference>
<dbReference type="STRING" id="227321.P15699"/>
<dbReference type="GeneID" id="2873450"/>
<dbReference type="KEGG" id="ani:ANIA_04035"/>
<dbReference type="eggNOG" id="ENOG502SIAM">
    <property type="taxonomic scope" value="Eukaryota"/>
</dbReference>
<dbReference type="HOGENOM" id="CLU_006329_4_0_1"/>
<dbReference type="InParanoid" id="P15699"/>
<dbReference type="OrthoDB" id="4236860at2759"/>
<dbReference type="Proteomes" id="UP000000560">
    <property type="component" value="Chromosome II"/>
</dbReference>
<dbReference type="GO" id="GO:0005634">
    <property type="term" value="C:nucleus"/>
    <property type="evidence" value="ECO:0007669"/>
    <property type="project" value="UniProtKB-SubCell"/>
</dbReference>
<dbReference type="GO" id="GO:0003677">
    <property type="term" value="F:DNA binding"/>
    <property type="evidence" value="ECO:0007669"/>
    <property type="project" value="UniProtKB-KW"/>
</dbReference>
<dbReference type="GO" id="GO:0000981">
    <property type="term" value="F:DNA-binding transcription factor activity, RNA polymerase II-specific"/>
    <property type="evidence" value="ECO:0007669"/>
    <property type="project" value="InterPro"/>
</dbReference>
<dbReference type="GO" id="GO:0008270">
    <property type="term" value="F:zinc ion binding"/>
    <property type="evidence" value="ECO:0007669"/>
    <property type="project" value="InterPro"/>
</dbReference>
<dbReference type="GO" id="GO:0006351">
    <property type="term" value="P:DNA-templated transcription"/>
    <property type="evidence" value="ECO:0007669"/>
    <property type="project" value="InterPro"/>
</dbReference>
<dbReference type="GO" id="GO:0009062">
    <property type="term" value="P:fatty acid catabolic process"/>
    <property type="evidence" value="ECO:0000318"/>
    <property type="project" value="GO_Central"/>
</dbReference>
<dbReference type="GO" id="GO:0045944">
    <property type="term" value="P:positive regulation of transcription by RNA polymerase II"/>
    <property type="evidence" value="ECO:0000318"/>
    <property type="project" value="GO_Central"/>
</dbReference>
<dbReference type="CDD" id="cd12148">
    <property type="entry name" value="fungal_TF_MHR"/>
    <property type="match status" value="1"/>
</dbReference>
<dbReference type="CDD" id="cd00067">
    <property type="entry name" value="GAL4"/>
    <property type="match status" value="1"/>
</dbReference>
<dbReference type="Gene3D" id="4.10.240.10">
    <property type="entry name" value="Zn(2)-C6 fungal-type DNA-binding domain"/>
    <property type="match status" value="1"/>
</dbReference>
<dbReference type="InterPro" id="IPR052073">
    <property type="entry name" value="Amide_Lactam_Regulators"/>
</dbReference>
<dbReference type="InterPro" id="IPR007219">
    <property type="entry name" value="Transcription_factor_dom_fun"/>
</dbReference>
<dbReference type="InterPro" id="IPR036864">
    <property type="entry name" value="Zn2-C6_fun-type_DNA-bd_sf"/>
</dbReference>
<dbReference type="InterPro" id="IPR001138">
    <property type="entry name" value="Zn2Cys6_DnaBD"/>
</dbReference>
<dbReference type="PANTHER" id="PTHR47171:SF4">
    <property type="entry name" value="ACETAMIDASE REGULATORY PROTEIN"/>
    <property type="match status" value="1"/>
</dbReference>
<dbReference type="PANTHER" id="PTHR47171">
    <property type="entry name" value="FARA-RELATED"/>
    <property type="match status" value="1"/>
</dbReference>
<dbReference type="Pfam" id="PF04082">
    <property type="entry name" value="Fungal_trans"/>
    <property type="match status" value="1"/>
</dbReference>
<dbReference type="Pfam" id="PF00172">
    <property type="entry name" value="Zn_clus"/>
    <property type="match status" value="1"/>
</dbReference>
<dbReference type="SMART" id="SM00906">
    <property type="entry name" value="Fungal_trans"/>
    <property type="match status" value="1"/>
</dbReference>
<dbReference type="SMART" id="SM00066">
    <property type="entry name" value="GAL4"/>
    <property type="match status" value="1"/>
</dbReference>
<dbReference type="SUPFAM" id="SSF57701">
    <property type="entry name" value="Zn2/Cys6 DNA-binding domain"/>
    <property type="match status" value="1"/>
</dbReference>
<dbReference type="PROSITE" id="PS00463">
    <property type="entry name" value="ZN2_CY6_FUNGAL_1"/>
    <property type="match status" value="1"/>
</dbReference>
<dbReference type="PROSITE" id="PS50048">
    <property type="entry name" value="ZN2_CY6_FUNGAL_2"/>
    <property type="match status" value="1"/>
</dbReference>
<gene>
    <name type="primary">amdR</name>
    <name type="synonym">intA</name>
    <name type="ORF">AN4035</name>
</gene>